<proteinExistence type="inferred from homology"/>
<evidence type="ECO:0000255" key="1">
    <source>
        <dbReference type="HAMAP-Rule" id="MF_01357"/>
    </source>
</evidence>
<sequence length="213" mass="23854">MTELPERSAATTGGAKTARDVSSLIAELGLTAEDSIEPTALVPPERLREVALALRDRGFMLMDTVGVDYGAFPERIPARFCVLHNVYHIKDRCRLFLRVWLEEGQALDSLYPVWRAANYLEREVYDLFGIEFVGHPDLRKILTPDDLEGHPLRKDFPLGESPTLFREGRFIDPPAFRAGLSGQNAGLTGWRGEFRRGERGDRVPPVLPEGGPQ</sequence>
<comment type="function">
    <text evidence="1">NDH-1 shuttles electrons from NADH, via FMN and iron-sulfur (Fe-S) centers, to quinones in the respiratory chain. The immediate electron acceptor for the enzyme in this species is believed to be a menaquinone. Couples the redox reaction to proton translocation (for every two electrons transferred, four hydrogen ions are translocated across the cytoplasmic membrane), and thus conserves the redox energy in a proton gradient.</text>
</comment>
<comment type="catalytic activity">
    <reaction evidence="1">
        <text>a quinone + NADH + 5 H(+)(in) = a quinol + NAD(+) + 4 H(+)(out)</text>
        <dbReference type="Rhea" id="RHEA:57888"/>
        <dbReference type="ChEBI" id="CHEBI:15378"/>
        <dbReference type="ChEBI" id="CHEBI:24646"/>
        <dbReference type="ChEBI" id="CHEBI:57540"/>
        <dbReference type="ChEBI" id="CHEBI:57945"/>
        <dbReference type="ChEBI" id="CHEBI:132124"/>
    </reaction>
</comment>
<comment type="subunit">
    <text evidence="1">NDH-1 is composed of 15 different subunits. Subunits NuoB, C, D, E, F, and G constitute the peripheral sector of the complex.</text>
</comment>
<comment type="subcellular location">
    <subcellularLocation>
        <location evidence="1">Cell membrane</location>
        <topology evidence="1">Peripheral membrane protein</topology>
        <orientation evidence="1">Cytoplasmic side</orientation>
    </subcellularLocation>
</comment>
<comment type="similarity">
    <text evidence="1">Belongs to the complex I 30 kDa subunit family.</text>
</comment>
<keyword id="KW-1003">Cell membrane</keyword>
<keyword id="KW-0472">Membrane</keyword>
<keyword id="KW-0520">NAD</keyword>
<keyword id="KW-0874">Quinone</keyword>
<keyword id="KW-1278">Translocase</keyword>
<keyword id="KW-0813">Transport</keyword>
<dbReference type="EC" id="7.1.1.-" evidence="1"/>
<dbReference type="EMBL" id="CP000359">
    <property type="protein sequence ID" value="ABF45213.1"/>
    <property type="molecule type" value="Genomic_DNA"/>
</dbReference>
<dbReference type="RefSeq" id="WP_011530051.1">
    <property type="nucleotide sequence ID" value="NC_008025.1"/>
</dbReference>
<dbReference type="SMR" id="Q1IZX1"/>
<dbReference type="STRING" id="319795.Dgeo_0911"/>
<dbReference type="KEGG" id="dge:Dgeo_0911"/>
<dbReference type="eggNOG" id="COG0852">
    <property type="taxonomic scope" value="Bacteria"/>
</dbReference>
<dbReference type="HOGENOM" id="CLU_042628_5_0_0"/>
<dbReference type="Proteomes" id="UP000002431">
    <property type="component" value="Chromosome"/>
</dbReference>
<dbReference type="GO" id="GO:0005886">
    <property type="term" value="C:plasma membrane"/>
    <property type="evidence" value="ECO:0007669"/>
    <property type="project" value="UniProtKB-SubCell"/>
</dbReference>
<dbReference type="GO" id="GO:0008137">
    <property type="term" value="F:NADH dehydrogenase (ubiquinone) activity"/>
    <property type="evidence" value="ECO:0007669"/>
    <property type="project" value="InterPro"/>
</dbReference>
<dbReference type="GO" id="GO:0050136">
    <property type="term" value="F:NADH:ubiquinone reductase (non-electrogenic) activity"/>
    <property type="evidence" value="ECO:0007669"/>
    <property type="project" value="UniProtKB-UniRule"/>
</dbReference>
<dbReference type="GO" id="GO:0048038">
    <property type="term" value="F:quinone binding"/>
    <property type="evidence" value="ECO:0007669"/>
    <property type="project" value="UniProtKB-KW"/>
</dbReference>
<dbReference type="Gene3D" id="3.30.460.80">
    <property type="entry name" value="NADH:ubiquinone oxidoreductase, 30kDa subunit"/>
    <property type="match status" value="1"/>
</dbReference>
<dbReference type="HAMAP" id="MF_01357">
    <property type="entry name" value="NDH1_NuoC"/>
    <property type="match status" value="1"/>
</dbReference>
<dbReference type="InterPro" id="IPR010218">
    <property type="entry name" value="NADH_DH_suC"/>
</dbReference>
<dbReference type="InterPro" id="IPR037232">
    <property type="entry name" value="NADH_quin_OxRdtase_su_C/D-like"/>
</dbReference>
<dbReference type="InterPro" id="IPR001268">
    <property type="entry name" value="NADH_UbQ_OxRdtase_30kDa_su"/>
</dbReference>
<dbReference type="InterPro" id="IPR020396">
    <property type="entry name" value="NADH_UbQ_OxRdtase_CS"/>
</dbReference>
<dbReference type="PANTHER" id="PTHR10884:SF14">
    <property type="entry name" value="NADH DEHYDROGENASE [UBIQUINONE] IRON-SULFUR PROTEIN 3, MITOCHONDRIAL"/>
    <property type="match status" value="1"/>
</dbReference>
<dbReference type="PANTHER" id="PTHR10884">
    <property type="entry name" value="NADH DEHYDROGENASE UBIQUINONE IRON-SULFUR PROTEIN 3"/>
    <property type="match status" value="1"/>
</dbReference>
<dbReference type="Pfam" id="PF00329">
    <property type="entry name" value="Complex1_30kDa"/>
    <property type="match status" value="1"/>
</dbReference>
<dbReference type="SUPFAM" id="SSF143243">
    <property type="entry name" value="Nqo5-like"/>
    <property type="match status" value="1"/>
</dbReference>
<dbReference type="PROSITE" id="PS00542">
    <property type="entry name" value="COMPLEX1_30K"/>
    <property type="match status" value="1"/>
</dbReference>
<name>NUOC_DEIGD</name>
<protein>
    <recommendedName>
        <fullName evidence="1">NADH-quinone oxidoreductase subunit C</fullName>
        <ecNumber evidence="1">7.1.1.-</ecNumber>
    </recommendedName>
    <alternativeName>
        <fullName evidence="1">NADH dehydrogenase I subunit C</fullName>
    </alternativeName>
    <alternativeName>
        <fullName evidence="1">NDH-1 subunit C</fullName>
    </alternativeName>
</protein>
<accession>Q1IZX1</accession>
<feature type="chain" id="PRO_0000358090" description="NADH-quinone oxidoreductase subunit C">
    <location>
        <begin position="1"/>
        <end position="213"/>
    </location>
</feature>
<gene>
    <name evidence="1" type="primary">nuoC</name>
    <name type="ordered locus">Dgeo_0911</name>
</gene>
<reference key="1">
    <citation type="submission" date="2006-04" db="EMBL/GenBank/DDBJ databases">
        <title>Complete sequence of chromosome of Deinococcus geothermalis DSM 11300.</title>
        <authorList>
            <person name="Copeland A."/>
            <person name="Lucas S."/>
            <person name="Lapidus A."/>
            <person name="Barry K."/>
            <person name="Detter J.C."/>
            <person name="Glavina del Rio T."/>
            <person name="Hammon N."/>
            <person name="Israni S."/>
            <person name="Dalin E."/>
            <person name="Tice H."/>
            <person name="Pitluck S."/>
            <person name="Brettin T."/>
            <person name="Bruce D."/>
            <person name="Han C."/>
            <person name="Tapia R."/>
            <person name="Saunders E."/>
            <person name="Gilna P."/>
            <person name="Schmutz J."/>
            <person name="Larimer F."/>
            <person name="Land M."/>
            <person name="Hauser L."/>
            <person name="Kyrpides N."/>
            <person name="Kim E."/>
            <person name="Daly M.J."/>
            <person name="Fredrickson J.K."/>
            <person name="Makarova K.S."/>
            <person name="Gaidamakova E.K."/>
            <person name="Zhai M."/>
            <person name="Richardson P."/>
        </authorList>
    </citation>
    <scope>NUCLEOTIDE SEQUENCE [LARGE SCALE GENOMIC DNA]</scope>
    <source>
        <strain>DSM 11300 / CIP 105573 / AG-3a</strain>
    </source>
</reference>
<organism>
    <name type="scientific">Deinococcus geothermalis (strain DSM 11300 / CIP 105573 / AG-3a)</name>
    <dbReference type="NCBI Taxonomy" id="319795"/>
    <lineage>
        <taxon>Bacteria</taxon>
        <taxon>Thermotogati</taxon>
        <taxon>Deinococcota</taxon>
        <taxon>Deinococci</taxon>
        <taxon>Deinococcales</taxon>
        <taxon>Deinococcaceae</taxon>
        <taxon>Deinococcus</taxon>
    </lineage>
</organism>